<accession>Q8K0W3</accession>
<accession>A2AI04</accession>
<accession>B2FDG8</accession>
<accession>Q8BTC4</accession>
<feature type="chain" id="PRO_0000274614" description="RING finger protein 208">
    <location>
        <begin position="1"/>
        <end position="265"/>
    </location>
</feature>
<feature type="zinc finger region" description="RING-type" evidence="1">
    <location>
        <begin position="147"/>
        <end position="194"/>
    </location>
</feature>
<feature type="region of interest" description="Disordered" evidence="2">
    <location>
        <begin position="83"/>
        <end position="106"/>
    </location>
</feature>
<feature type="modified residue" description="Phosphoserine" evidence="4">
    <location>
        <position position="103"/>
    </location>
</feature>
<sequence>MPADPGPEVGSGWPGLLMSCLKGPHVILKMEAMKIVHPEKFPELPAATPCFPPAPRPTPTLAPKRAWPSDTEIIVNQACGGDMPTLEGASHTPPLPRRPRKGSSELGFPRVAPVDEVIVNQYVIRPGPTASAPSSSGPVIAGEPLECPTCGHTYNVTQRRPRVLSCLHSVCEQCLQILYESCPKYKFISCPTCHRETVLFTDYGLAALAVNTSILSRLPPEALTAPSGGQWGGESEGSCYQTFRQYCGAACTCHVRNPLSACSIM</sequence>
<reference key="1">
    <citation type="journal article" date="2009" name="PLoS Biol.">
        <title>Lineage-specific biology revealed by a finished genome assembly of the mouse.</title>
        <authorList>
            <person name="Church D.M."/>
            <person name="Goodstadt L."/>
            <person name="Hillier L.W."/>
            <person name="Zody M.C."/>
            <person name="Goldstein S."/>
            <person name="She X."/>
            <person name="Bult C.J."/>
            <person name="Agarwala R."/>
            <person name="Cherry J.L."/>
            <person name="DiCuccio M."/>
            <person name="Hlavina W."/>
            <person name="Kapustin Y."/>
            <person name="Meric P."/>
            <person name="Maglott D."/>
            <person name="Birtle Z."/>
            <person name="Marques A.C."/>
            <person name="Graves T."/>
            <person name="Zhou S."/>
            <person name="Teague B."/>
            <person name="Potamousis K."/>
            <person name="Churas C."/>
            <person name="Place M."/>
            <person name="Herschleb J."/>
            <person name="Runnheim R."/>
            <person name="Forrest D."/>
            <person name="Amos-Landgraf J."/>
            <person name="Schwartz D.C."/>
            <person name="Cheng Z."/>
            <person name="Lindblad-Toh K."/>
            <person name="Eichler E.E."/>
            <person name="Ponting C.P."/>
        </authorList>
    </citation>
    <scope>NUCLEOTIDE SEQUENCE [LARGE SCALE GENOMIC DNA]</scope>
    <source>
        <strain>C57BL/6J</strain>
    </source>
</reference>
<reference key="2">
    <citation type="submission" date="2005-07" db="EMBL/GenBank/DDBJ databases">
        <authorList>
            <person name="Mural R.J."/>
            <person name="Adams M.D."/>
            <person name="Myers E.W."/>
            <person name="Smith H.O."/>
            <person name="Venter J.C."/>
        </authorList>
    </citation>
    <scope>NUCLEOTIDE SEQUENCE [LARGE SCALE GENOMIC DNA]</scope>
</reference>
<reference key="3">
    <citation type="journal article" date="2004" name="Genome Res.">
        <title>The status, quality, and expansion of the NIH full-length cDNA project: the Mammalian Gene Collection (MGC).</title>
        <authorList>
            <consortium name="The MGC Project Team"/>
        </authorList>
    </citation>
    <scope>NUCLEOTIDE SEQUENCE [LARGE SCALE MRNA]</scope>
    <source>
        <strain>Czech II</strain>
        <tissue>Lung</tissue>
    </source>
</reference>
<reference key="4">
    <citation type="journal article" date="2005" name="Science">
        <title>The transcriptional landscape of the mammalian genome.</title>
        <authorList>
            <person name="Carninci P."/>
            <person name="Kasukawa T."/>
            <person name="Katayama S."/>
            <person name="Gough J."/>
            <person name="Frith M.C."/>
            <person name="Maeda N."/>
            <person name="Oyama R."/>
            <person name="Ravasi T."/>
            <person name="Lenhard B."/>
            <person name="Wells C."/>
            <person name="Kodzius R."/>
            <person name="Shimokawa K."/>
            <person name="Bajic V.B."/>
            <person name="Brenner S.E."/>
            <person name="Batalov S."/>
            <person name="Forrest A.R."/>
            <person name="Zavolan M."/>
            <person name="Davis M.J."/>
            <person name="Wilming L.G."/>
            <person name="Aidinis V."/>
            <person name="Allen J.E."/>
            <person name="Ambesi-Impiombato A."/>
            <person name="Apweiler R."/>
            <person name="Aturaliya R.N."/>
            <person name="Bailey T.L."/>
            <person name="Bansal M."/>
            <person name="Baxter L."/>
            <person name="Beisel K.W."/>
            <person name="Bersano T."/>
            <person name="Bono H."/>
            <person name="Chalk A.M."/>
            <person name="Chiu K.P."/>
            <person name="Choudhary V."/>
            <person name="Christoffels A."/>
            <person name="Clutterbuck D.R."/>
            <person name="Crowe M.L."/>
            <person name="Dalla E."/>
            <person name="Dalrymple B.P."/>
            <person name="de Bono B."/>
            <person name="Della Gatta G."/>
            <person name="di Bernardo D."/>
            <person name="Down T."/>
            <person name="Engstrom P."/>
            <person name="Fagiolini M."/>
            <person name="Faulkner G."/>
            <person name="Fletcher C.F."/>
            <person name="Fukushima T."/>
            <person name="Furuno M."/>
            <person name="Futaki S."/>
            <person name="Gariboldi M."/>
            <person name="Georgii-Hemming P."/>
            <person name="Gingeras T.R."/>
            <person name="Gojobori T."/>
            <person name="Green R.E."/>
            <person name="Gustincich S."/>
            <person name="Harbers M."/>
            <person name="Hayashi Y."/>
            <person name="Hensch T.K."/>
            <person name="Hirokawa N."/>
            <person name="Hill D."/>
            <person name="Huminiecki L."/>
            <person name="Iacono M."/>
            <person name="Ikeo K."/>
            <person name="Iwama A."/>
            <person name="Ishikawa T."/>
            <person name="Jakt M."/>
            <person name="Kanapin A."/>
            <person name="Katoh M."/>
            <person name="Kawasawa Y."/>
            <person name="Kelso J."/>
            <person name="Kitamura H."/>
            <person name="Kitano H."/>
            <person name="Kollias G."/>
            <person name="Krishnan S.P."/>
            <person name="Kruger A."/>
            <person name="Kummerfeld S.K."/>
            <person name="Kurochkin I.V."/>
            <person name="Lareau L.F."/>
            <person name="Lazarevic D."/>
            <person name="Lipovich L."/>
            <person name="Liu J."/>
            <person name="Liuni S."/>
            <person name="McWilliam S."/>
            <person name="Madan Babu M."/>
            <person name="Madera M."/>
            <person name="Marchionni L."/>
            <person name="Matsuda H."/>
            <person name="Matsuzawa S."/>
            <person name="Miki H."/>
            <person name="Mignone F."/>
            <person name="Miyake S."/>
            <person name="Morris K."/>
            <person name="Mottagui-Tabar S."/>
            <person name="Mulder N."/>
            <person name="Nakano N."/>
            <person name="Nakauchi H."/>
            <person name="Ng P."/>
            <person name="Nilsson R."/>
            <person name="Nishiguchi S."/>
            <person name="Nishikawa S."/>
            <person name="Nori F."/>
            <person name="Ohara O."/>
            <person name="Okazaki Y."/>
            <person name="Orlando V."/>
            <person name="Pang K.C."/>
            <person name="Pavan W.J."/>
            <person name="Pavesi G."/>
            <person name="Pesole G."/>
            <person name="Petrovsky N."/>
            <person name="Piazza S."/>
            <person name="Reed J."/>
            <person name="Reid J.F."/>
            <person name="Ring B.Z."/>
            <person name="Ringwald M."/>
            <person name="Rost B."/>
            <person name="Ruan Y."/>
            <person name="Salzberg S.L."/>
            <person name="Sandelin A."/>
            <person name="Schneider C."/>
            <person name="Schoenbach C."/>
            <person name="Sekiguchi K."/>
            <person name="Semple C.A."/>
            <person name="Seno S."/>
            <person name="Sessa L."/>
            <person name="Sheng Y."/>
            <person name="Shibata Y."/>
            <person name="Shimada H."/>
            <person name="Shimada K."/>
            <person name="Silva D."/>
            <person name="Sinclair B."/>
            <person name="Sperling S."/>
            <person name="Stupka E."/>
            <person name="Sugiura K."/>
            <person name="Sultana R."/>
            <person name="Takenaka Y."/>
            <person name="Taki K."/>
            <person name="Tammoja K."/>
            <person name="Tan S.L."/>
            <person name="Tang S."/>
            <person name="Taylor M.S."/>
            <person name="Tegner J."/>
            <person name="Teichmann S.A."/>
            <person name="Ueda H.R."/>
            <person name="van Nimwegen E."/>
            <person name="Verardo R."/>
            <person name="Wei C.L."/>
            <person name="Yagi K."/>
            <person name="Yamanishi H."/>
            <person name="Zabarovsky E."/>
            <person name="Zhu S."/>
            <person name="Zimmer A."/>
            <person name="Hide W."/>
            <person name="Bult C."/>
            <person name="Grimmond S.M."/>
            <person name="Teasdale R.D."/>
            <person name="Liu E.T."/>
            <person name="Brusic V."/>
            <person name="Quackenbush J."/>
            <person name="Wahlestedt C."/>
            <person name="Mattick J.S."/>
            <person name="Hume D.A."/>
            <person name="Kai C."/>
            <person name="Sasaki D."/>
            <person name="Tomaru Y."/>
            <person name="Fukuda S."/>
            <person name="Kanamori-Katayama M."/>
            <person name="Suzuki M."/>
            <person name="Aoki J."/>
            <person name="Arakawa T."/>
            <person name="Iida J."/>
            <person name="Imamura K."/>
            <person name="Itoh M."/>
            <person name="Kato T."/>
            <person name="Kawaji H."/>
            <person name="Kawagashira N."/>
            <person name="Kawashima T."/>
            <person name="Kojima M."/>
            <person name="Kondo S."/>
            <person name="Konno H."/>
            <person name="Nakano K."/>
            <person name="Ninomiya N."/>
            <person name="Nishio T."/>
            <person name="Okada M."/>
            <person name="Plessy C."/>
            <person name="Shibata K."/>
            <person name="Shiraki T."/>
            <person name="Suzuki S."/>
            <person name="Tagami M."/>
            <person name="Waki K."/>
            <person name="Watahiki A."/>
            <person name="Okamura-Oho Y."/>
            <person name="Suzuki H."/>
            <person name="Kawai J."/>
            <person name="Hayashizaki Y."/>
        </authorList>
    </citation>
    <scope>NUCLEOTIDE SEQUENCE [LARGE SCALE MRNA] OF 138-265</scope>
    <source>
        <strain>C57BL/6J</strain>
        <tissue>Embryo</tissue>
    </source>
</reference>
<reference key="5">
    <citation type="journal article" date="2010" name="Cell">
        <title>A tissue-specific atlas of mouse protein phosphorylation and expression.</title>
        <authorList>
            <person name="Huttlin E.L."/>
            <person name="Jedrychowski M.P."/>
            <person name="Elias J.E."/>
            <person name="Goswami T."/>
            <person name="Rad R."/>
            <person name="Beausoleil S.A."/>
            <person name="Villen J."/>
            <person name="Haas W."/>
            <person name="Sowa M.E."/>
            <person name="Gygi S.P."/>
        </authorList>
    </citation>
    <scope>PHOSPHORYLATION [LARGE SCALE ANALYSIS] AT SER-103</scope>
    <scope>IDENTIFICATION BY MASS SPECTROMETRY [LARGE SCALE ANALYSIS]</scope>
    <source>
        <tissue>Brain</tissue>
    </source>
</reference>
<name>RN208_MOUSE</name>
<dbReference type="EMBL" id="AL732309">
    <property type="status" value="NOT_ANNOTATED_CDS"/>
    <property type="molecule type" value="Genomic_DNA"/>
</dbReference>
<dbReference type="EMBL" id="CH466542">
    <property type="protein sequence ID" value="EDL08218.1"/>
    <property type="molecule type" value="Genomic_DNA"/>
</dbReference>
<dbReference type="EMBL" id="BC030073">
    <property type="protein sequence ID" value="AAH30073.1"/>
    <property type="status" value="ALT_INIT"/>
    <property type="molecule type" value="mRNA"/>
</dbReference>
<dbReference type="EMBL" id="AK004344">
    <property type="protein sequence ID" value="BAC25078.1"/>
    <property type="molecule type" value="mRNA"/>
</dbReference>
<dbReference type="CCDS" id="CCDS15757.2"/>
<dbReference type="RefSeq" id="NP_789804.2">
    <property type="nucleotide sequence ID" value="NM_176834.2"/>
</dbReference>
<dbReference type="SMR" id="Q8K0W3"/>
<dbReference type="FunCoup" id="Q8K0W3">
    <property type="interactions" value="1060"/>
</dbReference>
<dbReference type="STRING" id="10090.ENSMUSP00000109995"/>
<dbReference type="GlyGen" id="Q8K0W3">
    <property type="glycosylation" value="2 sites"/>
</dbReference>
<dbReference type="iPTMnet" id="Q8K0W3"/>
<dbReference type="PhosphoSitePlus" id="Q8K0W3"/>
<dbReference type="SwissPalm" id="Q8K0W3"/>
<dbReference type="PaxDb" id="10090-ENSMUSP00000109995"/>
<dbReference type="ProteomicsDB" id="300538"/>
<dbReference type="Antibodypedia" id="32414">
    <property type="antibodies" value="77 antibodies from 15 providers"/>
</dbReference>
<dbReference type="DNASU" id="68846"/>
<dbReference type="Ensembl" id="ENSMUST00000060818.2">
    <property type="protein sequence ID" value="ENSMUSP00000057742.2"/>
    <property type="gene ID" value="ENSMUSG00000044628.6"/>
</dbReference>
<dbReference type="Ensembl" id="ENSMUST00000114355.2">
    <property type="protein sequence ID" value="ENSMUSP00000109995.2"/>
    <property type="gene ID" value="ENSMUSG00000044628.6"/>
</dbReference>
<dbReference type="GeneID" id="68846"/>
<dbReference type="KEGG" id="mmu:68846"/>
<dbReference type="UCSC" id="uc012bru.1">
    <property type="organism name" value="mouse"/>
</dbReference>
<dbReference type="AGR" id="MGI:1916096"/>
<dbReference type="CTD" id="727800"/>
<dbReference type="MGI" id="MGI:1916096">
    <property type="gene designation" value="Rnf208"/>
</dbReference>
<dbReference type="VEuPathDB" id="HostDB:ENSMUSG00000044628"/>
<dbReference type="eggNOG" id="KOG2177">
    <property type="taxonomic scope" value="Eukaryota"/>
</dbReference>
<dbReference type="GeneTree" id="ENSGT00680000100126"/>
<dbReference type="HOGENOM" id="CLU_061185_0_0_1"/>
<dbReference type="InParanoid" id="Q8K0W3"/>
<dbReference type="OMA" id="IVNQYVV"/>
<dbReference type="OrthoDB" id="342730at2759"/>
<dbReference type="PhylomeDB" id="Q8K0W3"/>
<dbReference type="TreeFam" id="TF331869"/>
<dbReference type="BioGRID-ORCS" id="68846">
    <property type="hits" value="4 hits in 80 CRISPR screens"/>
</dbReference>
<dbReference type="PRO" id="PR:Q8K0W3"/>
<dbReference type="Proteomes" id="UP000000589">
    <property type="component" value="Chromosome 2"/>
</dbReference>
<dbReference type="RNAct" id="Q8K0W3">
    <property type="molecule type" value="protein"/>
</dbReference>
<dbReference type="Bgee" id="ENSMUSG00000044628">
    <property type="expression patterns" value="Expressed in perirhinal cortex and 153 other cell types or tissues"/>
</dbReference>
<dbReference type="GO" id="GO:0005829">
    <property type="term" value="C:cytosol"/>
    <property type="evidence" value="ECO:0007669"/>
    <property type="project" value="Ensembl"/>
</dbReference>
<dbReference type="GO" id="GO:0005654">
    <property type="term" value="C:nucleoplasm"/>
    <property type="evidence" value="ECO:0007669"/>
    <property type="project" value="Ensembl"/>
</dbReference>
<dbReference type="GO" id="GO:0004842">
    <property type="term" value="F:ubiquitin-protein transferase activity"/>
    <property type="evidence" value="ECO:0007669"/>
    <property type="project" value="Ensembl"/>
</dbReference>
<dbReference type="GO" id="GO:0008270">
    <property type="term" value="F:zinc ion binding"/>
    <property type="evidence" value="ECO:0007669"/>
    <property type="project" value="UniProtKB-KW"/>
</dbReference>
<dbReference type="GO" id="GO:0051865">
    <property type="term" value="P:protein autoubiquitination"/>
    <property type="evidence" value="ECO:0007669"/>
    <property type="project" value="Ensembl"/>
</dbReference>
<dbReference type="CDD" id="cd16559">
    <property type="entry name" value="RING-HC_RNF208"/>
    <property type="match status" value="1"/>
</dbReference>
<dbReference type="FunFam" id="3.30.40.10:FF:000403">
    <property type="entry name" value="RING finger protein 208"/>
    <property type="match status" value="1"/>
</dbReference>
<dbReference type="Gene3D" id="3.30.40.10">
    <property type="entry name" value="Zinc/RING finger domain, C3HC4 (zinc finger)"/>
    <property type="match status" value="1"/>
</dbReference>
<dbReference type="InterPro" id="IPR051435">
    <property type="entry name" value="RING_finger_E3_ubiq-ligases"/>
</dbReference>
<dbReference type="InterPro" id="IPR040100">
    <property type="entry name" value="RNF208_RING-HC"/>
</dbReference>
<dbReference type="InterPro" id="IPR001841">
    <property type="entry name" value="Znf_RING"/>
</dbReference>
<dbReference type="InterPro" id="IPR013083">
    <property type="entry name" value="Znf_RING/FYVE/PHD"/>
</dbReference>
<dbReference type="InterPro" id="IPR017907">
    <property type="entry name" value="Znf_RING_CS"/>
</dbReference>
<dbReference type="PANTHER" id="PTHR22791:SF3">
    <property type="entry name" value="RING FINGER PROTEIN 208"/>
    <property type="match status" value="1"/>
</dbReference>
<dbReference type="PANTHER" id="PTHR22791">
    <property type="entry name" value="RING-TYPE DOMAIN-CONTAINING PROTEIN"/>
    <property type="match status" value="1"/>
</dbReference>
<dbReference type="SUPFAM" id="SSF57850">
    <property type="entry name" value="RING/U-box"/>
    <property type="match status" value="1"/>
</dbReference>
<dbReference type="PROSITE" id="PS00518">
    <property type="entry name" value="ZF_RING_1"/>
    <property type="match status" value="1"/>
</dbReference>
<dbReference type="PROSITE" id="PS50089">
    <property type="entry name" value="ZF_RING_2"/>
    <property type="match status" value="1"/>
</dbReference>
<protein>
    <recommendedName>
        <fullName>RING finger protein 208</fullName>
    </recommendedName>
</protein>
<keyword id="KW-0479">Metal-binding</keyword>
<keyword id="KW-0597">Phosphoprotein</keyword>
<keyword id="KW-1185">Reference proteome</keyword>
<keyword id="KW-0862">Zinc</keyword>
<keyword id="KW-0863">Zinc-finger</keyword>
<organism>
    <name type="scientific">Mus musculus</name>
    <name type="common">Mouse</name>
    <dbReference type="NCBI Taxonomy" id="10090"/>
    <lineage>
        <taxon>Eukaryota</taxon>
        <taxon>Metazoa</taxon>
        <taxon>Chordata</taxon>
        <taxon>Craniata</taxon>
        <taxon>Vertebrata</taxon>
        <taxon>Euteleostomi</taxon>
        <taxon>Mammalia</taxon>
        <taxon>Eutheria</taxon>
        <taxon>Euarchontoglires</taxon>
        <taxon>Glires</taxon>
        <taxon>Rodentia</taxon>
        <taxon>Myomorpha</taxon>
        <taxon>Muroidea</taxon>
        <taxon>Muridae</taxon>
        <taxon>Murinae</taxon>
        <taxon>Mus</taxon>
        <taxon>Mus</taxon>
    </lineage>
</organism>
<gene>
    <name type="primary">Rnf208</name>
</gene>
<comment type="sequence caution" evidence="3">
    <conflict type="erroneous initiation">
        <sequence resource="EMBL-CDS" id="AAH30073"/>
    </conflict>
</comment>
<evidence type="ECO:0000255" key="1">
    <source>
        <dbReference type="PROSITE-ProRule" id="PRU00175"/>
    </source>
</evidence>
<evidence type="ECO:0000256" key="2">
    <source>
        <dbReference type="SAM" id="MobiDB-lite"/>
    </source>
</evidence>
<evidence type="ECO:0000305" key="3"/>
<evidence type="ECO:0007744" key="4">
    <source>
    </source>
</evidence>
<proteinExistence type="evidence at protein level"/>